<proteinExistence type="inferred from homology"/>
<name>PLY_PSEVI</name>
<protein>
    <recommendedName>
        <fullName>Pectate lyase</fullName>
        <shortName>PL</shortName>
        <ecNumber>4.2.2.2</ecNumber>
    </recommendedName>
</protein>
<dbReference type="EC" id="4.2.2.2"/>
<dbReference type="EMBL" id="L38901">
    <property type="protein sequence ID" value="AAB46398.1"/>
    <property type="molecule type" value="Genomic_DNA"/>
</dbReference>
<dbReference type="EMBL" id="D44611">
    <property type="protein sequence ID" value="BAA08077.1"/>
    <property type="molecule type" value="Genomic_DNA"/>
</dbReference>
<dbReference type="EMBL" id="L38574">
    <property type="protein sequence ID" value="AAC41521.1"/>
    <property type="molecule type" value="Genomic_DNA"/>
</dbReference>
<dbReference type="SMR" id="Q60140"/>
<dbReference type="STRING" id="33069.AO065_03110"/>
<dbReference type="CAZy" id="PL1">
    <property type="family name" value="Polysaccharide Lyase Family 1"/>
</dbReference>
<dbReference type="UniPathway" id="UPA00545">
    <property type="reaction ID" value="UER00824"/>
</dbReference>
<dbReference type="GO" id="GO:0005576">
    <property type="term" value="C:extracellular region"/>
    <property type="evidence" value="ECO:0007669"/>
    <property type="project" value="UniProtKB-SubCell"/>
</dbReference>
<dbReference type="GO" id="GO:0046872">
    <property type="term" value="F:metal ion binding"/>
    <property type="evidence" value="ECO:0007669"/>
    <property type="project" value="UniProtKB-KW"/>
</dbReference>
<dbReference type="GO" id="GO:0030570">
    <property type="term" value="F:pectate lyase activity"/>
    <property type="evidence" value="ECO:0007669"/>
    <property type="project" value="UniProtKB-EC"/>
</dbReference>
<dbReference type="GO" id="GO:0045490">
    <property type="term" value="P:pectin catabolic process"/>
    <property type="evidence" value="ECO:0007669"/>
    <property type="project" value="UniProtKB-UniPathway"/>
</dbReference>
<dbReference type="Gene3D" id="2.160.20.10">
    <property type="entry name" value="Single-stranded right-handed beta-helix, Pectin lyase-like"/>
    <property type="match status" value="1"/>
</dbReference>
<dbReference type="InterPro" id="IPR002022">
    <property type="entry name" value="Pec_lyase"/>
</dbReference>
<dbReference type="InterPro" id="IPR012334">
    <property type="entry name" value="Pectin_lyas_fold"/>
</dbReference>
<dbReference type="InterPro" id="IPR011050">
    <property type="entry name" value="Pectin_lyase_fold/virulence"/>
</dbReference>
<dbReference type="InterPro" id="IPR045032">
    <property type="entry name" value="PEL"/>
</dbReference>
<dbReference type="PANTHER" id="PTHR31683">
    <property type="entry name" value="PECTATE LYASE 18-RELATED"/>
    <property type="match status" value="1"/>
</dbReference>
<dbReference type="PANTHER" id="PTHR31683:SF18">
    <property type="entry name" value="PECTATE LYASE 21-RELATED"/>
    <property type="match status" value="1"/>
</dbReference>
<dbReference type="Pfam" id="PF00544">
    <property type="entry name" value="Pectate_lyase_4"/>
    <property type="match status" value="1"/>
</dbReference>
<dbReference type="SMART" id="SM00656">
    <property type="entry name" value="Amb_all"/>
    <property type="match status" value="1"/>
</dbReference>
<dbReference type="SUPFAM" id="SSF51126">
    <property type="entry name" value="Pectin lyase-like"/>
    <property type="match status" value="1"/>
</dbReference>
<reference key="1">
    <citation type="journal article" date="1996" name="Mol. Plant Microbe Interact.">
        <title>Cloning of a pectate lyase gene from Xanthomonas campestris pv. malvacearum and comparison of its sequence relationship with pel genes of soft-rot Erwinia and Pseudomonas.</title>
        <authorList>
            <person name="Liao C.H."/>
            <person name="Gaffney T.D."/>
            <person name="Bradley S.P."/>
            <person name="Wong L.C."/>
        </authorList>
    </citation>
    <scope>NUCLEOTIDE SEQUENCE [GENOMIC DNA]</scope>
    <source>
        <strain>SJ074</strain>
    </source>
</reference>
<organism>
    <name type="scientific">Pseudomonas viridiflava</name>
    <name type="common">Phytomonas viridiflava</name>
    <dbReference type="NCBI Taxonomy" id="33069"/>
    <lineage>
        <taxon>Bacteria</taxon>
        <taxon>Pseudomonadati</taxon>
        <taxon>Pseudomonadota</taxon>
        <taxon>Gammaproteobacteria</taxon>
        <taxon>Pseudomonadales</taxon>
        <taxon>Pseudomonadaceae</taxon>
        <taxon>Pseudomonas</taxon>
    </lineage>
</organism>
<evidence type="ECO:0000250" key="1"/>
<evidence type="ECO:0000255" key="2"/>
<evidence type="ECO:0000256" key="3">
    <source>
        <dbReference type="SAM" id="MobiDB-lite"/>
    </source>
</evidence>
<evidence type="ECO:0000305" key="4"/>
<sequence length="380" mass="40384">MVKPSLFSANKLASAVVASLLFASAGAQADIATDVATTGWATQNGGTKGGSKAAANNIYTVKNAAELKAALKASVGTNGRIIKISGVIDVSEGNAYTKTADMKARGRLDIPGKTTIVGITNNAEIREGFFYAKENDVIIRNLTIENPWDPEPIWDANDGSAGNWNSEYDGLTIEGANNVWVDHVTFTDGRRTDDQNGTANGRPKQHHDGALDVKNGANYVTISYTAFKSHEKNNLIGSSDSRTTDDGKLKVTIHNSLFENISARAPRVRFGQVHLYNNYHVGSASHSVYPFSYAHGIGKSSKIFSEKNAFEISGISGCTKIAGDYGGSVYRDSGSTLNGTALTCTWSSSIGWTPPYSYTPLNADKVKADVTAKAGAGKIL</sequence>
<keyword id="KW-0106">Calcium</keyword>
<keyword id="KW-0456">Lyase</keyword>
<keyword id="KW-0479">Metal-binding</keyword>
<keyword id="KW-0964">Secreted</keyword>
<keyword id="KW-0732">Signal</keyword>
<accession>Q60140</accession>
<accession>Q52619</accession>
<gene>
    <name type="primary">pel</name>
</gene>
<feature type="signal peptide" evidence="2">
    <location>
        <begin position="1"/>
        <end position="29"/>
    </location>
</feature>
<feature type="chain" id="PRO_0000024863" description="Pectate lyase">
    <location>
        <begin position="30"/>
        <end position="380"/>
    </location>
</feature>
<feature type="region of interest" description="Disordered" evidence="3">
    <location>
        <begin position="189"/>
        <end position="209"/>
    </location>
</feature>
<feature type="active site" evidence="2">
    <location>
        <position position="264"/>
    </location>
</feature>
<feature type="binding site" evidence="1">
    <location>
        <position position="169"/>
    </location>
    <ligand>
        <name>Ca(2+)</name>
        <dbReference type="ChEBI" id="CHEBI:29108"/>
    </ligand>
</feature>
<feature type="binding site" evidence="1">
    <location>
        <position position="208"/>
    </location>
    <ligand>
        <name>Ca(2+)</name>
        <dbReference type="ChEBI" id="CHEBI:29108"/>
    </ligand>
</feature>
<feature type="binding site" evidence="1">
    <location>
        <position position="212"/>
    </location>
    <ligand>
        <name>Ca(2+)</name>
        <dbReference type="ChEBI" id="CHEBI:29108"/>
    </ligand>
</feature>
<feature type="sequence conflict" description="In Ref. 1; AAC41521." evidence="4" ref="1">
    <original>I</original>
    <variation>V</variation>
    <location>
        <position position="297"/>
    </location>
</feature>
<feature type="sequence conflict" description="In Ref. 1; AAC41521." evidence="4" ref="1">
    <original>L</original>
    <variation>DSRGS</variation>
    <location>
        <position position="380"/>
    </location>
</feature>
<comment type="function">
    <text>Plays a role in bacterial invasion of plants.</text>
</comment>
<comment type="catalytic activity">
    <reaction>
        <text>Eliminative cleavage of (1-&gt;4)-alpha-D-galacturonan to give oligosaccharides with 4-deoxy-alpha-D-galact-4-enuronosyl groups at their non-reducing ends.</text>
        <dbReference type="EC" id="4.2.2.2"/>
    </reaction>
</comment>
<comment type="cofactor">
    <cofactor evidence="1">
        <name>Ca(2+)</name>
        <dbReference type="ChEBI" id="CHEBI:29108"/>
    </cofactor>
    <text evidence="1">Binds 1 Ca(2+) ion per subunit.</text>
</comment>
<comment type="pathway">
    <text>Glycan metabolism; pectin degradation; 2-dehydro-3-deoxy-D-gluconate from pectin: step 2/5.</text>
</comment>
<comment type="subcellular location">
    <subcellularLocation>
        <location>Secreted</location>
    </subcellularLocation>
</comment>
<comment type="similarity">
    <text evidence="4">Belongs to the polysaccharide lyase 1 family.</text>
</comment>